<gene>
    <name evidence="1" type="primary">atpF</name>
    <name type="ordered locus">KRH_09800</name>
</gene>
<proteinExistence type="inferred from homology"/>
<sequence>MLAAEEANPLIPDVWEMLITGIGFVILLFIAIKYIVPAFEKVFKDRADAIEGGLAKAKAAQAEAKAARDEYNQQLESARLEAQKIREEARSEGEKILADFKDRANMESARITENAHKAIEAERAAAVVSLRDEVGTLATQLASKIVGESLNDDDRANRVVDRFLADLDAEQGRTGAAR</sequence>
<evidence type="ECO:0000255" key="1">
    <source>
        <dbReference type="HAMAP-Rule" id="MF_01398"/>
    </source>
</evidence>
<accession>B2GLY6</accession>
<name>ATPF_KOCRD</name>
<comment type="function">
    <text evidence="1">F(1)F(0) ATP synthase produces ATP from ADP in the presence of a proton or sodium gradient. F-type ATPases consist of two structural domains, F(1) containing the extramembraneous catalytic core and F(0) containing the membrane proton channel, linked together by a central stalk and a peripheral stalk. During catalysis, ATP synthesis in the catalytic domain of F(1) is coupled via a rotary mechanism of the central stalk subunits to proton translocation.</text>
</comment>
<comment type="function">
    <text evidence="1">Component of the F(0) channel, it forms part of the peripheral stalk, linking F(1) to F(0).</text>
</comment>
<comment type="subunit">
    <text evidence="1">F-type ATPases have 2 components, F(1) - the catalytic core - and F(0) - the membrane proton channel. F(1) has five subunits: alpha(3), beta(3), gamma(1), delta(1), epsilon(1). F(0) has three main subunits: a(1), b(2) and c(10-14). The alpha and beta chains form an alternating ring which encloses part of the gamma chain. F(1) is attached to F(0) by a central stalk formed by the gamma and epsilon chains, while a peripheral stalk is formed by the delta and b chains.</text>
</comment>
<comment type="subcellular location">
    <subcellularLocation>
        <location evidence="1">Cell membrane</location>
        <topology evidence="1">Single-pass membrane protein</topology>
    </subcellularLocation>
</comment>
<comment type="similarity">
    <text evidence="1">Belongs to the ATPase B chain family.</text>
</comment>
<reference key="1">
    <citation type="journal article" date="2008" name="J. Bacteriol.">
        <title>Complete genome sequence of the soil actinomycete Kocuria rhizophila.</title>
        <authorList>
            <person name="Takarada H."/>
            <person name="Sekine M."/>
            <person name="Kosugi H."/>
            <person name="Matsuo Y."/>
            <person name="Fujisawa T."/>
            <person name="Omata S."/>
            <person name="Kishi E."/>
            <person name="Shimizu A."/>
            <person name="Tsukatani N."/>
            <person name="Tanikawa S."/>
            <person name="Fujita N."/>
            <person name="Harayama S."/>
        </authorList>
    </citation>
    <scope>NUCLEOTIDE SEQUENCE [LARGE SCALE GENOMIC DNA]</scope>
    <source>
        <strain>ATCC 9341 / DSM 348 / NBRC 103217 / DC2201</strain>
    </source>
</reference>
<dbReference type="EMBL" id="AP009152">
    <property type="protein sequence ID" value="BAG29327.1"/>
    <property type="molecule type" value="Genomic_DNA"/>
</dbReference>
<dbReference type="SMR" id="B2GLY6"/>
<dbReference type="STRING" id="378753.KRH_09800"/>
<dbReference type="KEGG" id="krh:KRH_09800"/>
<dbReference type="eggNOG" id="COG0711">
    <property type="taxonomic scope" value="Bacteria"/>
</dbReference>
<dbReference type="HOGENOM" id="CLU_079215_5_1_11"/>
<dbReference type="Proteomes" id="UP000008838">
    <property type="component" value="Chromosome"/>
</dbReference>
<dbReference type="GO" id="GO:0005886">
    <property type="term" value="C:plasma membrane"/>
    <property type="evidence" value="ECO:0007669"/>
    <property type="project" value="UniProtKB-SubCell"/>
</dbReference>
<dbReference type="GO" id="GO:0045259">
    <property type="term" value="C:proton-transporting ATP synthase complex"/>
    <property type="evidence" value="ECO:0007669"/>
    <property type="project" value="UniProtKB-KW"/>
</dbReference>
<dbReference type="GO" id="GO:0046933">
    <property type="term" value="F:proton-transporting ATP synthase activity, rotational mechanism"/>
    <property type="evidence" value="ECO:0007669"/>
    <property type="project" value="UniProtKB-UniRule"/>
</dbReference>
<dbReference type="GO" id="GO:0046961">
    <property type="term" value="F:proton-transporting ATPase activity, rotational mechanism"/>
    <property type="evidence" value="ECO:0007669"/>
    <property type="project" value="TreeGrafter"/>
</dbReference>
<dbReference type="CDD" id="cd06503">
    <property type="entry name" value="ATP-synt_Fo_b"/>
    <property type="match status" value="1"/>
</dbReference>
<dbReference type="Gene3D" id="1.20.5.620">
    <property type="entry name" value="F1F0 ATP synthase subunit B, membrane domain"/>
    <property type="match status" value="1"/>
</dbReference>
<dbReference type="HAMAP" id="MF_01398">
    <property type="entry name" value="ATP_synth_b_bprime"/>
    <property type="match status" value="1"/>
</dbReference>
<dbReference type="InterPro" id="IPR028987">
    <property type="entry name" value="ATP_synth_B-like_membr_sf"/>
</dbReference>
<dbReference type="InterPro" id="IPR002146">
    <property type="entry name" value="ATP_synth_b/b'su_bac/chlpt"/>
</dbReference>
<dbReference type="InterPro" id="IPR005864">
    <property type="entry name" value="ATP_synth_F0_bsu_bac"/>
</dbReference>
<dbReference type="InterPro" id="IPR050059">
    <property type="entry name" value="ATP_synthase_B_chain"/>
</dbReference>
<dbReference type="NCBIfam" id="TIGR01144">
    <property type="entry name" value="ATP_synt_b"/>
    <property type="match status" value="1"/>
</dbReference>
<dbReference type="NCBIfam" id="NF004412">
    <property type="entry name" value="PRK05759.1-3"/>
    <property type="match status" value="1"/>
</dbReference>
<dbReference type="PANTHER" id="PTHR33445:SF1">
    <property type="entry name" value="ATP SYNTHASE SUBUNIT B"/>
    <property type="match status" value="1"/>
</dbReference>
<dbReference type="PANTHER" id="PTHR33445">
    <property type="entry name" value="ATP SYNTHASE SUBUNIT B', CHLOROPLASTIC"/>
    <property type="match status" value="1"/>
</dbReference>
<dbReference type="Pfam" id="PF00430">
    <property type="entry name" value="ATP-synt_B"/>
    <property type="match status" value="1"/>
</dbReference>
<dbReference type="SUPFAM" id="SSF81573">
    <property type="entry name" value="F1F0 ATP synthase subunit B, membrane domain"/>
    <property type="match status" value="1"/>
</dbReference>
<keyword id="KW-0066">ATP synthesis</keyword>
<keyword id="KW-1003">Cell membrane</keyword>
<keyword id="KW-0138">CF(0)</keyword>
<keyword id="KW-0375">Hydrogen ion transport</keyword>
<keyword id="KW-0406">Ion transport</keyword>
<keyword id="KW-0472">Membrane</keyword>
<keyword id="KW-1185">Reference proteome</keyword>
<keyword id="KW-0812">Transmembrane</keyword>
<keyword id="KW-1133">Transmembrane helix</keyword>
<keyword id="KW-0813">Transport</keyword>
<protein>
    <recommendedName>
        <fullName evidence="1">ATP synthase subunit b</fullName>
    </recommendedName>
    <alternativeName>
        <fullName evidence="1">ATP synthase F(0) sector subunit b</fullName>
    </alternativeName>
    <alternativeName>
        <fullName evidence="1">ATPase subunit I</fullName>
    </alternativeName>
    <alternativeName>
        <fullName evidence="1">F-type ATPase subunit b</fullName>
        <shortName evidence="1">F-ATPase subunit b</shortName>
    </alternativeName>
</protein>
<feature type="chain" id="PRO_0000368536" description="ATP synthase subunit b">
    <location>
        <begin position="1"/>
        <end position="178"/>
    </location>
</feature>
<feature type="transmembrane region" description="Helical" evidence="1">
    <location>
        <begin position="19"/>
        <end position="39"/>
    </location>
</feature>
<organism>
    <name type="scientific">Kocuria rhizophila (strain ATCC 9341 / DSM 348 / NBRC 103217 / DC2201)</name>
    <dbReference type="NCBI Taxonomy" id="378753"/>
    <lineage>
        <taxon>Bacteria</taxon>
        <taxon>Bacillati</taxon>
        <taxon>Actinomycetota</taxon>
        <taxon>Actinomycetes</taxon>
        <taxon>Micrococcales</taxon>
        <taxon>Micrococcaceae</taxon>
        <taxon>Kocuria</taxon>
    </lineage>
</organism>